<name>KDPA_STAAC</name>
<comment type="function">
    <text evidence="1">Part of the high-affinity ATP-driven potassium transport (or Kdp) system, which catalyzes the hydrolysis of ATP coupled with the electrogenic transport of potassium into the cytoplasm. This subunit binds the extracellular potassium ions and delivers the ions to the membrane domain of KdpB through an intramembrane tunnel.</text>
</comment>
<comment type="subunit">
    <text evidence="1">The system is composed of three essential subunits: KdpA, KdpB and KdpC.</text>
</comment>
<comment type="subcellular location">
    <subcellularLocation>
        <location evidence="1">Cell membrane</location>
        <topology evidence="1">Multi-pass membrane protein</topology>
    </subcellularLocation>
</comment>
<comment type="similarity">
    <text evidence="1">Belongs to the KdpA family.</text>
</comment>
<organism>
    <name type="scientific">Staphylococcus aureus (strain COL)</name>
    <dbReference type="NCBI Taxonomy" id="93062"/>
    <lineage>
        <taxon>Bacteria</taxon>
        <taxon>Bacillati</taxon>
        <taxon>Bacillota</taxon>
        <taxon>Bacilli</taxon>
        <taxon>Bacillales</taxon>
        <taxon>Staphylococcaceae</taxon>
        <taxon>Staphylococcus</taxon>
    </lineage>
</organism>
<accession>Q5HEC3</accession>
<reference key="1">
    <citation type="journal article" date="2005" name="J. Bacteriol.">
        <title>Insights on evolution of virulence and resistance from the complete genome analysis of an early methicillin-resistant Staphylococcus aureus strain and a biofilm-producing methicillin-resistant Staphylococcus epidermidis strain.</title>
        <authorList>
            <person name="Gill S.R."/>
            <person name="Fouts D.E."/>
            <person name="Archer G.L."/>
            <person name="Mongodin E.F."/>
            <person name="DeBoy R.T."/>
            <person name="Ravel J."/>
            <person name="Paulsen I.T."/>
            <person name="Kolonay J.F."/>
            <person name="Brinkac L.M."/>
            <person name="Beanan M.J."/>
            <person name="Dodson R.J."/>
            <person name="Daugherty S.C."/>
            <person name="Madupu R."/>
            <person name="Angiuoli S.V."/>
            <person name="Durkin A.S."/>
            <person name="Haft D.H."/>
            <person name="Vamathevan J.J."/>
            <person name="Khouri H."/>
            <person name="Utterback T.R."/>
            <person name="Lee C."/>
            <person name="Dimitrov G."/>
            <person name="Jiang L."/>
            <person name="Qin H."/>
            <person name="Weidman J."/>
            <person name="Tran K."/>
            <person name="Kang K.H."/>
            <person name="Hance I.R."/>
            <person name="Nelson K.E."/>
            <person name="Fraser C.M."/>
        </authorList>
    </citation>
    <scope>NUCLEOTIDE SEQUENCE [LARGE SCALE GENOMIC DNA]</scope>
    <source>
        <strain>COL</strain>
    </source>
</reference>
<keyword id="KW-1003">Cell membrane</keyword>
<keyword id="KW-0406">Ion transport</keyword>
<keyword id="KW-0472">Membrane</keyword>
<keyword id="KW-0630">Potassium</keyword>
<keyword id="KW-0633">Potassium transport</keyword>
<keyword id="KW-0812">Transmembrane</keyword>
<keyword id="KW-1133">Transmembrane helix</keyword>
<keyword id="KW-0813">Transport</keyword>
<feature type="chain" id="PRO_0000166524" description="Potassium-transporting ATPase potassium-binding subunit">
    <location>
        <begin position="1"/>
        <end position="558"/>
    </location>
</feature>
<feature type="transmembrane region" description="Helical" evidence="1">
    <location>
        <begin position="1"/>
        <end position="21"/>
    </location>
</feature>
<feature type="transmembrane region" description="Helical" evidence="1">
    <location>
        <begin position="66"/>
        <end position="86"/>
    </location>
</feature>
<feature type="transmembrane region" description="Helical" evidence="1">
    <location>
        <begin position="127"/>
        <end position="147"/>
    </location>
</feature>
<feature type="transmembrane region" description="Helical" evidence="1">
    <location>
        <begin position="166"/>
        <end position="186"/>
    </location>
</feature>
<feature type="transmembrane region" description="Helical" evidence="1">
    <location>
        <begin position="245"/>
        <end position="265"/>
    </location>
</feature>
<feature type="transmembrane region" description="Helical" evidence="1">
    <location>
        <begin position="281"/>
        <end position="301"/>
    </location>
</feature>
<feature type="transmembrane region" description="Helical" evidence="1">
    <location>
        <begin position="327"/>
        <end position="347"/>
    </location>
</feature>
<feature type="transmembrane region" description="Helical" evidence="1">
    <location>
        <begin position="354"/>
        <end position="374"/>
    </location>
</feature>
<feature type="transmembrane region" description="Helical" evidence="1">
    <location>
        <begin position="377"/>
        <end position="397"/>
    </location>
</feature>
<feature type="transmembrane region" description="Helical" evidence="1">
    <location>
        <begin position="416"/>
        <end position="436"/>
    </location>
</feature>
<feature type="transmembrane region" description="Helical" evidence="1">
    <location>
        <begin position="482"/>
        <end position="502"/>
    </location>
</feature>
<feature type="transmembrane region" description="Helical" evidence="1">
    <location>
        <begin position="531"/>
        <end position="551"/>
    </location>
</feature>
<gene>
    <name evidence="1" type="primary">kdpA</name>
    <name type="ordered locus">SACOL2068</name>
</gene>
<evidence type="ECO:0000255" key="1">
    <source>
        <dbReference type="HAMAP-Rule" id="MF_00275"/>
    </source>
</evidence>
<protein>
    <recommendedName>
        <fullName evidence="1">Potassium-transporting ATPase potassium-binding subunit</fullName>
    </recommendedName>
    <alternativeName>
        <fullName evidence="1">ATP phosphohydrolase [potassium-transporting] A chain</fullName>
    </alternativeName>
    <alternativeName>
        <fullName evidence="1">Potassium-binding and translocating subunit A</fullName>
    </alternativeName>
    <alternativeName>
        <fullName evidence="1">Potassium-translocating ATPase A chain</fullName>
    </alternativeName>
</protein>
<proteinExistence type="inferred from homology"/>
<dbReference type="EMBL" id="CP000046">
    <property type="protein sequence ID" value="AAW37030.1"/>
    <property type="molecule type" value="Genomic_DNA"/>
</dbReference>
<dbReference type="RefSeq" id="WP_000402656.1">
    <property type="nucleotide sequence ID" value="NZ_JBGOFO010000007.1"/>
</dbReference>
<dbReference type="SMR" id="Q5HEC3"/>
<dbReference type="KEGG" id="sac:SACOL2068"/>
<dbReference type="HOGENOM" id="CLU_018614_3_0_9"/>
<dbReference type="Proteomes" id="UP000000530">
    <property type="component" value="Chromosome"/>
</dbReference>
<dbReference type="GO" id="GO:0005886">
    <property type="term" value="C:plasma membrane"/>
    <property type="evidence" value="ECO:0007669"/>
    <property type="project" value="UniProtKB-SubCell"/>
</dbReference>
<dbReference type="GO" id="GO:0008556">
    <property type="term" value="F:P-type potassium transmembrane transporter activity"/>
    <property type="evidence" value="ECO:0007669"/>
    <property type="project" value="InterPro"/>
</dbReference>
<dbReference type="GO" id="GO:0030955">
    <property type="term" value="F:potassium ion binding"/>
    <property type="evidence" value="ECO:0007669"/>
    <property type="project" value="UniProtKB-UniRule"/>
</dbReference>
<dbReference type="HAMAP" id="MF_00275">
    <property type="entry name" value="KdpA"/>
    <property type="match status" value="1"/>
</dbReference>
<dbReference type="InterPro" id="IPR004623">
    <property type="entry name" value="KdpA"/>
</dbReference>
<dbReference type="NCBIfam" id="TIGR00680">
    <property type="entry name" value="kdpA"/>
    <property type="match status" value="1"/>
</dbReference>
<dbReference type="PANTHER" id="PTHR30607">
    <property type="entry name" value="POTASSIUM-TRANSPORTING ATPASE A CHAIN"/>
    <property type="match status" value="1"/>
</dbReference>
<dbReference type="PANTHER" id="PTHR30607:SF2">
    <property type="entry name" value="POTASSIUM-TRANSPORTING ATPASE POTASSIUM-BINDING SUBUNIT"/>
    <property type="match status" value="1"/>
</dbReference>
<dbReference type="Pfam" id="PF03814">
    <property type="entry name" value="KdpA"/>
    <property type="match status" value="1"/>
</dbReference>
<dbReference type="PIRSF" id="PIRSF001294">
    <property type="entry name" value="K_ATPaseA"/>
    <property type="match status" value="1"/>
</dbReference>
<sequence>MEIILFLTMMVMITYVFSGYLYRVALVQSSRVDLIFTRFENMCFKIIGTDLEHMSAKTYVKHFLAFNGFMGFITFVLLIVQQWLFLNPNHNLNQSIDLAFNTAISFLTNSNLQHYNGESDVTYLTQMIVMTYLMFTSSASGYAVCIAMLRRLTGLTNIIGNFYQDIVRFIVRVLLPLSCLISILLMTQGVPQTLHANLMIRTLSGHIQHIAFGPIASLESIKHLGTNGGGFLAGNSATPFENPNIWSNFIEMGSMMLLPMSMLFLFGRMLSRHGKRVHRHALILFVAMFFIFIAILTLTMWSEYRGNPILANLGIYGPNMEGKEVRFGAGLSALFTVITTAFTTGSVNNMHDSLTPIGGLGPMVLMMLNVVFGGEGVGLMNLLIFVLLTVFICSLMVGKTPEYLNMPIGAREMKCIVLVFLIHPILILVFSALAFMIPGASESITNPSFHGISQVMYEMTSAAANNGSGFEGLKDDTTFWNISTGIIMLLSRYIPIILQLMIASSLVNKKSYHQDKYTIAIDKPYFGVSLIVFIVLLSGLTFIPVLLLGPIGEFLTLK</sequence>